<name>SYFA_PORGI</name>
<protein>
    <recommendedName>
        <fullName evidence="1">Phenylalanine--tRNA ligase alpha subunit</fullName>
        <ecNumber evidence="1">6.1.1.20</ecNumber>
    </recommendedName>
    <alternativeName>
        <fullName evidence="1">Phenylalanyl-tRNA synthetase alpha subunit</fullName>
        <shortName evidence="1">PheRS</shortName>
    </alternativeName>
</protein>
<evidence type="ECO:0000255" key="1">
    <source>
        <dbReference type="HAMAP-Rule" id="MF_00281"/>
    </source>
</evidence>
<dbReference type="EC" id="6.1.1.20" evidence="1"/>
<dbReference type="EMBL" id="AE015924">
    <property type="protein sequence ID" value="AAQ66772.1"/>
    <property type="molecule type" value="Genomic_DNA"/>
</dbReference>
<dbReference type="RefSeq" id="WP_005873733.1">
    <property type="nucleotide sequence ID" value="NC_002950.2"/>
</dbReference>
<dbReference type="SMR" id="Q7MU04"/>
<dbReference type="STRING" id="242619.PG_1771"/>
<dbReference type="EnsemblBacteria" id="AAQ66772">
    <property type="protein sequence ID" value="AAQ66772"/>
    <property type="gene ID" value="PG_1771"/>
</dbReference>
<dbReference type="GeneID" id="29256875"/>
<dbReference type="KEGG" id="pgi:PG_1771"/>
<dbReference type="eggNOG" id="COG0016">
    <property type="taxonomic scope" value="Bacteria"/>
</dbReference>
<dbReference type="HOGENOM" id="CLU_025086_0_1_10"/>
<dbReference type="Proteomes" id="UP000000588">
    <property type="component" value="Chromosome"/>
</dbReference>
<dbReference type="GO" id="GO:0005737">
    <property type="term" value="C:cytoplasm"/>
    <property type="evidence" value="ECO:0007669"/>
    <property type="project" value="UniProtKB-SubCell"/>
</dbReference>
<dbReference type="GO" id="GO:0005524">
    <property type="term" value="F:ATP binding"/>
    <property type="evidence" value="ECO:0007669"/>
    <property type="project" value="UniProtKB-UniRule"/>
</dbReference>
<dbReference type="GO" id="GO:0000287">
    <property type="term" value="F:magnesium ion binding"/>
    <property type="evidence" value="ECO:0007669"/>
    <property type="project" value="UniProtKB-UniRule"/>
</dbReference>
<dbReference type="GO" id="GO:0004826">
    <property type="term" value="F:phenylalanine-tRNA ligase activity"/>
    <property type="evidence" value="ECO:0007669"/>
    <property type="project" value="UniProtKB-UniRule"/>
</dbReference>
<dbReference type="GO" id="GO:0000049">
    <property type="term" value="F:tRNA binding"/>
    <property type="evidence" value="ECO:0007669"/>
    <property type="project" value="InterPro"/>
</dbReference>
<dbReference type="GO" id="GO:0006432">
    <property type="term" value="P:phenylalanyl-tRNA aminoacylation"/>
    <property type="evidence" value="ECO:0007669"/>
    <property type="project" value="UniProtKB-UniRule"/>
</dbReference>
<dbReference type="CDD" id="cd00496">
    <property type="entry name" value="PheRS_alpha_core"/>
    <property type="match status" value="1"/>
</dbReference>
<dbReference type="Gene3D" id="3.30.930.10">
    <property type="entry name" value="Bira Bifunctional Protein, Domain 2"/>
    <property type="match status" value="1"/>
</dbReference>
<dbReference type="HAMAP" id="MF_00281">
    <property type="entry name" value="Phe_tRNA_synth_alpha1"/>
    <property type="match status" value="1"/>
</dbReference>
<dbReference type="InterPro" id="IPR006195">
    <property type="entry name" value="aa-tRNA-synth_II"/>
</dbReference>
<dbReference type="InterPro" id="IPR045864">
    <property type="entry name" value="aa-tRNA-synth_II/BPL/LPL"/>
</dbReference>
<dbReference type="InterPro" id="IPR004529">
    <property type="entry name" value="Phe-tRNA-synth_IIc_asu"/>
</dbReference>
<dbReference type="InterPro" id="IPR004188">
    <property type="entry name" value="Phe-tRNA_ligase_II_N"/>
</dbReference>
<dbReference type="InterPro" id="IPR022911">
    <property type="entry name" value="Phe_tRNA_ligase_alpha1_bac"/>
</dbReference>
<dbReference type="InterPro" id="IPR002319">
    <property type="entry name" value="Phenylalanyl-tRNA_Synthase"/>
</dbReference>
<dbReference type="InterPro" id="IPR010978">
    <property type="entry name" value="tRNA-bd_arm"/>
</dbReference>
<dbReference type="NCBIfam" id="TIGR00468">
    <property type="entry name" value="pheS"/>
    <property type="match status" value="1"/>
</dbReference>
<dbReference type="PANTHER" id="PTHR11538:SF41">
    <property type="entry name" value="PHENYLALANINE--TRNA LIGASE, MITOCHONDRIAL"/>
    <property type="match status" value="1"/>
</dbReference>
<dbReference type="PANTHER" id="PTHR11538">
    <property type="entry name" value="PHENYLALANYL-TRNA SYNTHETASE"/>
    <property type="match status" value="1"/>
</dbReference>
<dbReference type="Pfam" id="PF02912">
    <property type="entry name" value="Phe_tRNA-synt_N"/>
    <property type="match status" value="1"/>
</dbReference>
<dbReference type="Pfam" id="PF01409">
    <property type="entry name" value="tRNA-synt_2d"/>
    <property type="match status" value="1"/>
</dbReference>
<dbReference type="SUPFAM" id="SSF55681">
    <property type="entry name" value="Class II aaRS and biotin synthetases"/>
    <property type="match status" value="1"/>
</dbReference>
<dbReference type="SUPFAM" id="SSF46589">
    <property type="entry name" value="tRNA-binding arm"/>
    <property type="match status" value="1"/>
</dbReference>
<dbReference type="PROSITE" id="PS50862">
    <property type="entry name" value="AA_TRNA_LIGASE_II"/>
    <property type="match status" value="1"/>
</dbReference>
<sequence>MKERINQLLQEIGQCVAATVEEAEALRIKYLSKKGEIARLFDDFRLVPSEEKKQIGQMLNELKNKAQEHINSLRERAQAGSAQASAETDLTRTSYPTRLGTRHPISLVKQEICEIFARLGFSIADGPEIEDDWHVFSSMNFAEDHPARDMQDTFFIEHRPDVILRTHTSSVQSRVMEKTQPPIRVICPGRTYRNEAISYRAHCFFHQVEALYVDKDVSFADLRQVLLYFAQEMFGAETKIRLRPSYFPFTEPSAEMDISCNICGGKGCNFCKHTGWVEILGCGMVDPNVLDNCGIDSKKYSGYALGMGIERITNLKYRVKDLRFFSENDLNFLEQFKSVH</sequence>
<keyword id="KW-0030">Aminoacyl-tRNA synthetase</keyword>
<keyword id="KW-0067">ATP-binding</keyword>
<keyword id="KW-0963">Cytoplasm</keyword>
<keyword id="KW-0436">Ligase</keyword>
<keyword id="KW-0460">Magnesium</keyword>
<keyword id="KW-0479">Metal-binding</keyword>
<keyword id="KW-0547">Nucleotide-binding</keyword>
<keyword id="KW-0648">Protein biosynthesis</keyword>
<keyword id="KW-1185">Reference proteome</keyword>
<feature type="chain" id="PRO_0000126740" description="Phenylalanine--tRNA ligase alpha subunit">
    <location>
        <begin position="1"/>
        <end position="340"/>
    </location>
</feature>
<feature type="binding site" evidence="1">
    <location>
        <position position="251"/>
    </location>
    <ligand>
        <name>Mg(2+)</name>
        <dbReference type="ChEBI" id="CHEBI:18420"/>
        <note>shared with beta subunit</note>
    </ligand>
</feature>
<gene>
    <name evidence="1" type="primary">pheS</name>
    <name type="ordered locus">PG_1771</name>
</gene>
<reference key="1">
    <citation type="journal article" date="2003" name="J. Bacteriol.">
        <title>Complete genome sequence of the oral pathogenic bacterium Porphyromonas gingivalis strain W83.</title>
        <authorList>
            <person name="Nelson K.E."/>
            <person name="Fleischmann R.D."/>
            <person name="DeBoy R.T."/>
            <person name="Paulsen I.T."/>
            <person name="Fouts D.E."/>
            <person name="Eisen J.A."/>
            <person name="Daugherty S.C."/>
            <person name="Dodson R.J."/>
            <person name="Durkin A.S."/>
            <person name="Gwinn M.L."/>
            <person name="Haft D.H."/>
            <person name="Kolonay J.F."/>
            <person name="Nelson W.C."/>
            <person name="Mason T.M."/>
            <person name="Tallon L."/>
            <person name="Gray J."/>
            <person name="Granger D."/>
            <person name="Tettelin H."/>
            <person name="Dong H."/>
            <person name="Galvin J.L."/>
            <person name="Duncan M.J."/>
            <person name="Dewhirst F.E."/>
            <person name="Fraser C.M."/>
        </authorList>
    </citation>
    <scope>NUCLEOTIDE SEQUENCE [LARGE SCALE GENOMIC DNA]</scope>
    <source>
        <strain>ATCC BAA-308 / W83</strain>
    </source>
</reference>
<organism>
    <name type="scientific">Porphyromonas gingivalis (strain ATCC BAA-308 / W83)</name>
    <dbReference type="NCBI Taxonomy" id="242619"/>
    <lineage>
        <taxon>Bacteria</taxon>
        <taxon>Pseudomonadati</taxon>
        <taxon>Bacteroidota</taxon>
        <taxon>Bacteroidia</taxon>
        <taxon>Bacteroidales</taxon>
        <taxon>Porphyromonadaceae</taxon>
        <taxon>Porphyromonas</taxon>
    </lineage>
</organism>
<comment type="catalytic activity">
    <reaction evidence="1">
        <text>tRNA(Phe) + L-phenylalanine + ATP = L-phenylalanyl-tRNA(Phe) + AMP + diphosphate + H(+)</text>
        <dbReference type="Rhea" id="RHEA:19413"/>
        <dbReference type="Rhea" id="RHEA-COMP:9668"/>
        <dbReference type="Rhea" id="RHEA-COMP:9699"/>
        <dbReference type="ChEBI" id="CHEBI:15378"/>
        <dbReference type="ChEBI" id="CHEBI:30616"/>
        <dbReference type="ChEBI" id="CHEBI:33019"/>
        <dbReference type="ChEBI" id="CHEBI:58095"/>
        <dbReference type="ChEBI" id="CHEBI:78442"/>
        <dbReference type="ChEBI" id="CHEBI:78531"/>
        <dbReference type="ChEBI" id="CHEBI:456215"/>
        <dbReference type="EC" id="6.1.1.20"/>
    </reaction>
</comment>
<comment type="cofactor">
    <cofactor evidence="1">
        <name>Mg(2+)</name>
        <dbReference type="ChEBI" id="CHEBI:18420"/>
    </cofactor>
    <text evidence="1">Binds 2 magnesium ions per tetramer.</text>
</comment>
<comment type="subunit">
    <text evidence="1">Tetramer of two alpha and two beta subunits.</text>
</comment>
<comment type="subcellular location">
    <subcellularLocation>
        <location evidence="1">Cytoplasm</location>
    </subcellularLocation>
</comment>
<comment type="similarity">
    <text evidence="1">Belongs to the class-II aminoacyl-tRNA synthetase family. Phe-tRNA synthetase alpha subunit type 1 subfamily.</text>
</comment>
<proteinExistence type="inferred from homology"/>
<accession>Q7MU04</accession>